<evidence type="ECO:0000250" key="1"/>
<evidence type="ECO:0000250" key="2">
    <source>
        <dbReference type="UniProtKB" id="P01148"/>
    </source>
</evidence>
<evidence type="ECO:0000305" key="3"/>
<comment type="function">
    <text>Stimulates the secretion of gonadotropins; it stimulates the secretion of both luteinizing and follicle-stimulating hormones.</text>
</comment>
<comment type="subcellular location">
    <subcellularLocation>
        <location>Secreted</location>
    </subcellularLocation>
</comment>
<comment type="tissue specificity">
    <text>Central nervous system.</text>
</comment>
<comment type="PTM">
    <molecule>Gonadoliberin-1</molecule>
    <text evidence="2">The precursor is cleaved by ACE, which removes the Gly-Lys-Arg peptide at the C-terminus, leading to mature hormone. The mature form of Gonadoliberin-1 is also cleaved and degraded by ACE.</text>
</comment>
<comment type="similarity">
    <text evidence="3">Belongs to the GnRH family.</text>
</comment>
<sequence>METIPKLMAAVVLLTVCLEGCSSQHWSYGLRPGGKRNTEHLVDSFQEMGKEEDQMAEPQNFECTVHWPRSPLRDLRGALERLIEEEAGQKKM</sequence>
<reference key="1">
    <citation type="journal article" date="1986" name="Proc. Natl. Acad. Sci. U.S.A.">
        <title>Isolation of the gene and hypothalamic cDNA for the common precursor of gonadotropin-releasing hormone and prolactin release-inhibiting factor in human and rat.</title>
        <authorList>
            <person name="Adelman J.P."/>
            <person name="Mason A.J."/>
            <person name="Hayflick J.S."/>
            <person name="Seeburg P.H."/>
        </authorList>
    </citation>
    <scope>NUCLEOTIDE SEQUENCE [MRNA]</scope>
</reference>
<reference key="2">
    <citation type="journal article" date="1989" name="Mol. Endocrinol.">
        <title>The rat gonadotropin-releasing hormone: SH locus: structure and hypothalamic expression.</title>
        <authorList>
            <person name="Bond C.T."/>
            <person name="Hayflick J.S."/>
            <person name="Seeburg P.H."/>
            <person name="Adelman J.P."/>
        </authorList>
    </citation>
    <scope>NUCLEOTIDE SEQUENCE</scope>
</reference>
<reference key="3">
    <citation type="journal article" date="1992" name="Cell. Mol. Neurobiol.">
        <title>Thymocytes express a mRNA that is identical to hypothalamic luteinizing hormone-releasing hormone mRNA.</title>
        <authorList>
            <person name="Maier C.C."/>
            <person name="Marchetti B."/>
            <person name="Leboeuf R.D."/>
            <person name="Blalock J.E."/>
        </authorList>
    </citation>
    <scope>NUCLEOTIDE SEQUENCE</scope>
    <source>
        <tissue>Thymus</tissue>
    </source>
</reference>
<reference key="4">
    <citation type="journal article" date="1987" name="Science">
        <title>Two mammalian genes transcribed from opposite strands of the same DNA locus.</title>
        <authorList>
            <person name="Adelman J.P."/>
            <person name="Bond C.T."/>
            <person name="Douglass J."/>
            <person name="Herbert E."/>
        </authorList>
    </citation>
    <scope>NUCLEOTIDE SEQUENCE [MRNA] OF 1-47</scope>
    <source>
        <tissue>Heart</tissue>
    </source>
</reference>
<gene>
    <name type="primary">Gnrh1</name>
    <name type="synonym">Gnrh</name>
</gene>
<proteinExistence type="evidence at transcript level"/>
<protein>
    <recommendedName>
        <fullName>Progonadoliberin-1</fullName>
    </recommendedName>
    <alternativeName>
        <fullName>Progonadoliberin I</fullName>
    </alternativeName>
    <component>
        <recommendedName>
            <fullName>Gonadoliberin-1</fullName>
        </recommendedName>
        <alternativeName>
            <fullName>Gonadoliberin I</fullName>
        </alternativeName>
        <alternativeName>
            <fullName>Gonadotropin-releasing hormone I</fullName>
            <shortName>GnRH-I</shortName>
        </alternativeName>
        <alternativeName>
            <fullName>Luliberin I</fullName>
        </alternativeName>
        <alternativeName>
            <fullName>Luteinizing hormone-releasing hormone I</fullName>
            <shortName>LH-RH I</shortName>
        </alternativeName>
    </component>
    <component>
        <recommendedName>
            <fullName>Prolactin release-inhibiting factor 1</fullName>
        </recommendedName>
        <alternativeName>
            <fullName>Prolactin release-inhibiting factor I</fullName>
        </alternativeName>
    </component>
</protein>
<name>GON1_RAT</name>
<keyword id="KW-0027">Amidation</keyword>
<keyword id="KW-0165">Cleavage on pair of basic residues</keyword>
<keyword id="KW-0372">Hormone</keyword>
<keyword id="KW-0873">Pyrrolidone carboxylic acid</keyword>
<keyword id="KW-1185">Reference proteome</keyword>
<keyword id="KW-0964">Secreted</keyword>
<keyword id="KW-0732">Signal</keyword>
<dbReference type="EMBL" id="S50870">
    <property type="protein sequence ID" value="AAB24572.1"/>
    <property type="molecule type" value="mRNA"/>
</dbReference>
<dbReference type="EMBL" id="M12579">
    <property type="protein sequence ID" value="AAA41263.1"/>
    <property type="molecule type" value="mRNA"/>
</dbReference>
<dbReference type="EMBL" id="M31670">
    <property type="protein sequence ID" value="AAA41264.1"/>
    <property type="molecule type" value="Genomic_DNA"/>
</dbReference>
<dbReference type="EMBL" id="M15527">
    <property type="protein sequence ID" value="AAA42141.1"/>
    <property type="status" value="ALT_SEQ"/>
    <property type="molecule type" value="mRNA"/>
</dbReference>
<dbReference type="EMBL" id="M15529">
    <property type="protein sequence ID" value="AAA42139.1"/>
    <property type="molecule type" value="mRNA"/>
</dbReference>
<dbReference type="EMBL" id="M15528">
    <property type="status" value="NOT_ANNOTATED_CDS"/>
    <property type="molecule type" value="mRNA"/>
</dbReference>
<dbReference type="PIR" id="A40147">
    <property type="entry name" value="RHRTG"/>
</dbReference>
<dbReference type="RefSeq" id="NP_036899.1">
    <property type="nucleotide sequence ID" value="NM_012767.2"/>
</dbReference>
<dbReference type="FunCoup" id="P07490">
    <property type="interactions" value="116"/>
</dbReference>
<dbReference type="STRING" id="10116.ENSRNOP00000018006"/>
<dbReference type="BindingDB" id="P07490"/>
<dbReference type="PaxDb" id="10116-ENSRNOP00000018006"/>
<dbReference type="GeneID" id="25194"/>
<dbReference type="KEGG" id="rno:25194"/>
<dbReference type="UCSC" id="RGD:2720">
    <property type="organism name" value="rat"/>
</dbReference>
<dbReference type="AGR" id="RGD:2720"/>
<dbReference type="CTD" id="2796"/>
<dbReference type="RGD" id="2720">
    <property type="gene designation" value="Gnrh1"/>
</dbReference>
<dbReference type="VEuPathDB" id="HostDB:ENSRNOG00000066847"/>
<dbReference type="eggNOG" id="ENOG502S8C8">
    <property type="taxonomic scope" value="Eukaryota"/>
</dbReference>
<dbReference type="HOGENOM" id="CLU_2412553_0_0_1"/>
<dbReference type="InParanoid" id="P07490"/>
<dbReference type="OrthoDB" id="8716567at2759"/>
<dbReference type="PhylomeDB" id="P07490"/>
<dbReference type="TreeFam" id="TF330934"/>
<dbReference type="Reactome" id="R-RNO-375281">
    <property type="pathway name" value="Hormone ligand-binding receptors"/>
</dbReference>
<dbReference type="Reactome" id="R-RNO-416476">
    <property type="pathway name" value="G alpha (q) signalling events"/>
</dbReference>
<dbReference type="PRO" id="PR:P07490"/>
<dbReference type="Proteomes" id="UP000002494">
    <property type="component" value="Chromosome 15"/>
</dbReference>
<dbReference type="Bgee" id="ENSRNOG00000013441">
    <property type="expression patterns" value="Expressed in pancreas and 19 other cell types or tissues"/>
</dbReference>
<dbReference type="GO" id="GO:0043679">
    <property type="term" value="C:axon terminus"/>
    <property type="evidence" value="ECO:0000314"/>
    <property type="project" value="RGD"/>
</dbReference>
<dbReference type="GO" id="GO:0098556">
    <property type="term" value="C:cytoplasmic side of rough endoplasmic reticulum membrane"/>
    <property type="evidence" value="ECO:0000314"/>
    <property type="project" value="RGD"/>
</dbReference>
<dbReference type="GO" id="GO:0030425">
    <property type="term" value="C:dendrite"/>
    <property type="evidence" value="ECO:0000314"/>
    <property type="project" value="RGD"/>
</dbReference>
<dbReference type="GO" id="GO:0005615">
    <property type="term" value="C:extracellular space"/>
    <property type="evidence" value="ECO:0000314"/>
    <property type="project" value="RGD"/>
</dbReference>
<dbReference type="GO" id="GO:0005798">
    <property type="term" value="C:Golgi-associated vesicle"/>
    <property type="evidence" value="ECO:0000314"/>
    <property type="project" value="RGD"/>
</dbReference>
<dbReference type="GO" id="GO:1990008">
    <property type="term" value="C:neurosecretory vesicle"/>
    <property type="evidence" value="ECO:0000314"/>
    <property type="project" value="RGD"/>
</dbReference>
<dbReference type="GO" id="GO:0043204">
    <property type="term" value="C:perikaryon"/>
    <property type="evidence" value="ECO:0000314"/>
    <property type="project" value="RGD"/>
</dbReference>
<dbReference type="GO" id="GO:0005183">
    <property type="term" value="F:gonadotropin hormone-releasing hormone activity"/>
    <property type="evidence" value="ECO:0000314"/>
    <property type="project" value="RGD"/>
</dbReference>
<dbReference type="GO" id="GO:0031530">
    <property type="term" value="F:gonadotropin-releasing hormone receptor binding"/>
    <property type="evidence" value="ECO:0000318"/>
    <property type="project" value="GO_Central"/>
</dbReference>
<dbReference type="GO" id="GO:0044849">
    <property type="term" value="P:estrous cycle"/>
    <property type="evidence" value="ECO:0000270"/>
    <property type="project" value="RGD"/>
</dbReference>
<dbReference type="GO" id="GO:0007565">
    <property type="term" value="P:female pregnancy"/>
    <property type="evidence" value="ECO:0000270"/>
    <property type="project" value="RGD"/>
</dbReference>
<dbReference type="GO" id="GO:0030238">
    <property type="term" value="P:male sex determination"/>
    <property type="evidence" value="ECO:0000315"/>
    <property type="project" value="RGD"/>
</dbReference>
<dbReference type="GO" id="GO:0043066">
    <property type="term" value="P:negative regulation of apoptotic process"/>
    <property type="evidence" value="ECO:0000314"/>
    <property type="project" value="RGD"/>
</dbReference>
<dbReference type="GO" id="GO:0033087">
    <property type="term" value="P:negative regulation of immature T cell proliferation"/>
    <property type="evidence" value="ECO:0000315"/>
    <property type="project" value="RGD"/>
</dbReference>
<dbReference type="GO" id="GO:2001223">
    <property type="term" value="P:negative regulation of neuron migration"/>
    <property type="evidence" value="ECO:0000266"/>
    <property type="project" value="RGD"/>
</dbReference>
<dbReference type="GO" id="GO:0042698">
    <property type="term" value="P:ovulation cycle"/>
    <property type="evidence" value="ECO:0000270"/>
    <property type="project" value="RGD"/>
</dbReference>
<dbReference type="GO" id="GO:0010468">
    <property type="term" value="P:regulation of gene expression"/>
    <property type="evidence" value="ECO:0000266"/>
    <property type="project" value="RGD"/>
</dbReference>
<dbReference type="GO" id="GO:2000354">
    <property type="term" value="P:regulation of ovarian follicle development"/>
    <property type="evidence" value="ECO:0000266"/>
    <property type="project" value="RGD"/>
</dbReference>
<dbReference type="GO" id="GO:0023051">
    <property type="term" value="P:regulation of signaling"/>
    <property type="evidence" value="ECO:0000318"/>
    <property type="project" value="GO_Central"/>
</dbReference>
<dbReference type="GO" id="GO:0045471">
    <property type="term" value="P:response to ethanol"/>
    <property type="evidence" value="ECO:0000266"/>
    <property type="project" value="RGD"/>
</dbReference>
<dbReference type="GO" id="GO:0032496">
    <property type="term" value="P:response to lipopolysaccharide"/>
    <property type="evidence" value="ECO:0000270"/>
    <property type="project" value="RGD"/>
</dbReference>
<dbReference type="GO" id="GO:0043434">
    <property type="term" value="P:response to peptide hormone"/>
    <property type="evidence" value="ECO:0000270"/>
    <property type="project" value="RGD"/>
</dbReference>
<dbReference type="GO" id="GO:0035864">
    <property type="term" value="P:response to potassium ion"/>
    <property type="evidence" value="ECO:0000270"/>
    <property type="project" value="RGD"/>
</dbReference>
<dbReference type="GO" id="GO:1990637">
    <property type="term" value="P:response to prolactin"/>
    <property type="evidence" value="ECO:0000270"/>
    <property type="project" value="RGD"/>
</dbReference>
<dbReference type="GO" id="GO:0034695">
    <property type="term" value="P:response to prostaglandin E"/>
    <property type="evidence" value="ECO:0000270"/>
    <property type="project" value="RGD"/>
</dbReference>
<dbReference type="GO" id="GO:0048545">
    <property type="term" value="P:response to steroid hormone"/>
    <property type="evidence" value="ECO:0000266"/>
    <property type="project" value="RGD"/>
</dbReference>
<dbReference type="GO" id="GO:0033574">
    <property type="term" value="P:response to testosterone"/>
    <property type="evidence" value="ECO:0000270"/>
    <property type="project" value="RGD"/>
</dbReference>
<dbReference type="InterPro" id="IPR002012">
    <property type="entry name" value="GnRH"/>
</dbReference>
<dbReference type="InterPro" id="IPR019792">
    <property type="entry name" value="Gonadoliberin"/>
</dbReference>
<dbReference type="InterPro" id="IPR004079">
    <property type="entry name" value="Gonadoliberin_I_precursor"/>
</dbReference>
<dbReference type="PANTHER" id="PTHR10522">
    <property type="entry name" value="GONADOLIBERIN"/>
    <property type="match status" value="1"/>
</dbReference>
<dbReference type="PANTHER" id="PTHR10522:SF0">
    <property type="entry name" value="PROGONADOLIBERIN-1"/>
    <property type="match status" value="1"/>
</dbReference>
<dbReference type="Pfam" id="PF00446">
    <property type="entry name" value="GnRH"/>
    <property type="match status" value="1"/>
</dbReference>
<dbReference type="PRINTS" id="PR01541">
    <property type="entry name" value="GONADOLIBRNI"/>
</dbReference>
<dbReference type="PROSITE" id="PS00473">
    <property type="entry name" value="GNRH"/>
    <property type="match status" value="1"/>
</dbReference>
<organism>
    <name type="scientific">Rattus norvegicus</name>
    <name type="common">Rat</name>
    <dbReference type="NCBI Taxonomy" id="10116"/>
    <lineage>
        <taxon>Eukaryota</taxon>
        <taxon>Metazoa</taxon>
        <taxon>Chordata</taxon>
        <taxon>Craniata</taxon>
        <taxon>Vertebrata</taxon>
        <taxon>Euteleostomi</taxon>
        <taxon>Mammalia</taxon>
        <taxon>Eutheria</taxon>
        <taxon>Euarchontoglires</taxon>
        <taxon>Glires</taxon>
        <taxon>Rodentia</taxon>
        <taxon>Myomorpha</taxon>
        <taxon>Muroidea</taxon>
        <taxon>Muridae</taxon>
        <taxon>Murinae</taxon>
        <taxon>Rattus</taxon>
    </lineage>
</organism>
<accession>P07490</accession>
<feature type="signal peptide">
    <location>
        <begin position="1"/>
        <end position="23"/>
    </location>
</feature>
<feature type="chain" id="PRO_0000012410" description="Progonadoliberin-1">
    <location>
        <begin position="24"/>
        <end position="92"/>
    </location>
</feature>
<feature type="peptide" id="PRO_0000012411" description="Gonadoliberin-1">
    <location>
        <begin position="24"/>
        <end position="33"/>
    </location>
</feature>
<feature type="peptide" id="PRO_0000012412" description="Prolactin release-inhibiting factor 1">
    <location>
        <begin position="37"/>
        <end position="92"/>
    </location>
</feature>
<feature type="site" description="Cleavage; by ACE" evidence="2">
    <location>
        <begin position="26"/>
        <end position="27"/>
    </location>
</feature>
<feature type="site" description="Appears to be essential for biological activity">
    <location>
        <position position="26"/>
    </location>
</feature>
<feature type="site" description="Cleavage; by ACE" evidence="2">
    <location>
        <begin position="28"/>
        <end position="29"/>
    </location>
</feature>
<feature type="site" description="Cleavage; by ACE" evidence="2">
    <location>
        <begin position="30"/>
        <end position="31"/>
    </location>
</feature>
<feature type="site" description="Cleavage; by ACE" evidence="2">
    <location>
        <begin position="33"/>
        <end position="34"/>
    </location>
</feature>
<feature type="modified residue" description="Pyrrolidone carboxylic acid" evidence="2">
    <location>
        <position position="24"/>
    </location>
</feature>
<feature type="modified residue" description="Glycine amide" evidence="1">
    <location>
        <position position="33"/>
    </location>
</feature>